<gene>
    <name evidence="1" type="primary">mtnN</name>
    <name type="ordered locus">Sputcn32_1134</name>
</gene>
<evidence type="ECO:0000255" key="1">
    <source>
        <dbReference type="HAMAP-Rule" id="MF_01684"/>
    </source>
</evidence>
<protein>
    <recommendedName>
        <fullName evidence="1">5'-methylthioadenosine/S-adenosylhomocysteine nucleosidase</fullName>
        <shortName evidence="1">MTA/SAH nucleosidase</shortName>
        <shortName evidence="1">MTAN</shortName>
        <ecNumber evidence="1">3.2.2.9</ecNumber>
    </recommendedName>
    <alternativeName>
        <fullName evidence="1">5'-deoxyadenosine nucleosidase</fullName>
        <shortName evidence="1">DOA nucleosidase</shortName>
        <shortName evidence="1">dAdo nucleosidase</shortName>
    </alternativeName>
    <alternativeName>
        <fullName evidence="1">5'-methylthioadenosine nucleosidase</fullName>
        <shortName evidence="1">MTA nucleosidase</shortName>
    </alternativeName>
    <alternativeName>
        <fullName evidence="1">S-adenosylhomocysteine nucleosidase</fullName>
        <shortName evidence="1">AdoHcy nucleosidase</shortName>
        <shortName evidence="1">SAH nucleosidase</shortName>
        <shortName evidence="1">SRH nucleosidase</shortName>
    </alternativeName>
</protein>
<reference key="1">
    <citation type="submission" date="2007-04" db="EMBL/GenBank/DDBJ databases">
        <title>Complete sequence of Shewanella putrefaciens CN-32.</title>
        <authorList>
            <consortium name="US DOE Joint Genome Institute"/>
            <person name="Copeland A."/>
            <person name="Lucas S."/>
            <person name="Lapidus A."/>
            <person name="Barry K."/>
            <person name="Detter J.C."/>
            <person name="Glavina del Rio T."/>
            <person name="Hammon N."/>
            <person name="Israni S."/>
            <person name="Dalin E."/>
            <person name="Tice H."/>
            <person name="Pitluck S."/>
            <person name="Chain P."/>
            <person name="Malfatti S."/>
            <person name="Shin M."/>
            <person name="Vergez L."/>
            <person name="Schmutz J."/>
            <person name="Larimer F."/>
            <person name="Land M."/>
            <person name="Hauser L."/>
            <person name="Kyrpides N."/>
            <person name="Mikhailova N."/>
            <person name="Romine M.F."/>
            <person name="Fredrickson J."/>
            <person name="Tiedje J."/>
            <person name="Richardson P."/>
        </authorList>
    </citation>
    <scope>NUCLEOTIDE SEQUENCE [LARGE SCALE GENOMIC DNA]</scope>
    <source>
        <strain>CN-32 / ATCC BAA-453</strain>
    </source>
</reference>
<feature type="chain" id="PRO_0000359349" description="5'-methylthioadenosine/S-adenosylhomocysteine nucleosidase">
    <location>
        <begin position="1"/>
        <end position="231"/>
    </location>
</feature>
<feature type="active site" description="Proton acceptor" evidence="1">
    <location>
        <position position="12"/>
    </location>
</feature>
<feature type="active site" description="Proton donor" evidence="1">
    <location>
        <position position="198"/>
    </location>
</feature>
<feature type="binding site" evidence="1">
    <location>
        <position position="78"/>
    </location>
    <ligand>
        <name>substrate</name>
    </ligand>
</feature>
<feature type="binding site" evidence="1">
    <location>
        <position position="153"/>
    </location>
    <ligand>
        <name>substrate</name>
    </ligand>
</feature>
<feature type="binding site" evidence="1">
    <location>
        <begin position="174"/>
        <end position="175"/>
    </location>
    <ligand>
        <name>substrate</name>
    </ligand>
</feature>
<name>MTNN_SHEPC</name>
<comment type="function">
    <text evidence="1">Catalyzes the irreversible cleavage of the glycosidic bond in both 5'-methylthioadenosine (MTA) and S-adenosylhomocysteine (SAH/AdoHcy) to adenine and the corresponding thioribose, 5'-methylthioribose and S-ribosylhomocysteine, respectively. Also cleaves 5'-deoxyadenosine, a toxic by-product of radical S-adenosylmethionine (SAM) enzymes, into 5-deoxyribose and adenine.</text>
</comment>
<comment type="catalytic activity">
    <reaction evidence="1">
        <text>S-adenosyl-L-homocysteine + H2O = S-(5-deoxy-D-ribos-5-yl)-L-homocysteine + adenine</text>
        <dbReference type="Rhea" id="RHEA:17805"/>
        <dbReference type="ChEBI" id="CHEBI:15377"/>
        <dbReference type="ChEBI" id="CHEBI:16708"/>
        <dbReference type="ChEBI" id="CHEBI:57856"/>
        <dbReference type="ChEBI" id="CHEBI:58195"/>
        <dbReference type="EC" id="3.2.2.9"/>
    </reaction>
</comment>
<comment type="catalytic activity">
    <reaction evidence="1">
        <text>S-methyl-5'-thioadenosine + H2O = 5-(methylsulfanyl)-D-ribose + adenine</text>
        <dbReference type="Rhea" id="RHEA:13617"/>
        <dbReference type="ChEBI" id="CHEBI:15377"/>
        <dbReference type="ChEBI" id="CHEBI:16708"/>
        <dbReference type="ChEBI" id="CHEBI:17509"/>
        <dbReference type="ChEBI" id="CHEBI:78440"/>
        <dbReference type="EC" id="3.2.2.9"/>
    </reaction>
</comment>
<comment type="catalytic activity">
    <reaction evidence="1">
        <text>5'-deoxyadenosine + H2O = 5-deoxy-D-ribose + adenine</text>
        <dbReference type="Rhea" id="RHEA:29859"/>
        <dbReference type="ChEBI" id="CHEBI:15377"/>
        <dbReference type="ChEBI" id="CHEBI:16708"/>
        <dbReference type="ChEBI" id="CHEBI:17319"/>
        <dbReference type="ChEBI" id="CHEBI:149540"/>
        <dbReference type="EC" id="3.2.2.9"/>
    </reaction>
    <physiologicalReaction direction="left-to-right" evidence="1">
        <dbReference type="Rhea" id="RHEA:29860"/>
    </physiologicalReaction>
</comment>
<comment type="pathway">
    <text evidence="1">Amino-acid biosynthesis; L-methionine biosynthesis via salvage pathway; S-methyl-5-thio-alpha-D-ribose 1-phosphate from S-methyl-5'-thioadenosine (hydrolase route): step 1/2.</text>
</comment>
<comment type="similarity">
    <text evidence="1">Belongs to the PNP/UDP phosphorylase family. MtnN subfamily.</text>
</comment>
<proteinExistence type="inferred from homology"/>
<keyword id="KW-0028">Amino-acid biosynthesis</keyword>
<keyword id="KW-0378">Hydrolase</keyword>
<keyword id="KW-0486">Methionine biosynthesis</keyword>
<organism>
    <name type="scientific">Shewanella putrefaciens (strain CN-32 / ATCC BAA-453)</name>
    <dbReference type="NCBI Taxonomy" id="319224"/>
    <lineage>
        <taxon>Bacteria</taxon>
        <taxon>Pseudomonadati</taxon>
        <taxon>Pseudomonadota</taxon>
        <taxon>Gammaproteobacteria</taxon>
        <taxon>Alteromonadales</taxon>
        <taxon>Shewanellaceae</taxon>
        <taxon>Shewanella</taxon>
    </lineage>
</organism>
<accession>A4Y4H9</accession>
<dbReference type="EC" id="3.2.2.9" evidence="1"/>
<dbReference type="EMBL" id="CP000681">
    <property type="protein sequence ID" value="ABP74862.1"/>
    <property type="molecule type" value="Genomic_DNA"/>
</dbReference>
<dbReference type="SMR" id="A4Y4H9"/>
<dbReference type="STRING" id="319224.Sputcn32_1134"/>
<dbReference type="KEGG" id="spc:Sputcn32_1134"/>
<dbReference type="eggNOG" id="COG0775">
    <property type="taxonomic scope" value="Bacteria"/>
</dbReference>
<dbReference type="HOGENOM" id="CLU_031248_2_2_6"/>
<dbReference type="UniPathway" id="UPA00904">
    <property type="reaction ID" value="UER00871"/>
</dbReference>
<dbReference type="GO" id="GO:0005829">
    <property type="term" value="C:cytosol"/>
    <property type="evidence" value="ECO:0007669"/>
    <property type="project" value="TreeGrafter"/>
</dbReference>
<dbReference type="GO" id="GO:0008782">
    <property type="term" value="F:adenosylhomocysteine nucleosidase activity"/>
    <property type="evidence" value="ECO:0007669"/>
    <property type="project" value="UniProtKB-UniRule"/>
</dbReference>
<dbReference type="GO" id="GO:0008930">
    <property type="term" value="F:methylthioadenosine nucleosidase activity"/>
    <property type="evidence" value="ECO:0007669"/>
    <property type="project" value="UniProtKB-UniRule"/>
</dbReference>
<dbReference type="GO" id="GO:0019509">
    <property type="term" value="P:L-methionine salvage from methylthioadenosine"/>
    <property type="evidence" value="ECO:0007669"/>
    <property type="project" value="UniProtKB-UniRule"/>
</dbReference>
<dbReference type="GO" id="GO:0019284">
    <property type="term" value="P:L-methionine salvage from S-adenosylmethionine"/>
    <property type="evidence" value="ECO:0007669"/>
    <property type="project" value="TreeGrafter"/>
</dbReference>
<dbReference type="GO" id="GO:0009164">
    <property type="term" value="P:nucleoside catabolic process"/>
    <property type="evidence" value="ECO:0007669"/>
    <property type="project" value="InterPro"/>
</dbReference>
<dbReference type="CDD" id="cd09008">
    <property type="entry name" value="MTAN"/>
    <property type="match status" value="1"/>
</dbReference>
<dbReference type="FunFam" id="3.40.50.1580:FF:000001">
    <property type="entry name" value="MTA/SAH nucleosidase family protein"/>
    <property type="match status" value="1"/>
</dbReference>
<dbReference type="Gene3D" id="3.40.50.1580">
    <property type="entry name" value="Nucleoside phosphorylase domain"/>
    <property type="match status" value="1"/>
</dbReference>
<dbReference type="HAMAP" id="MF_01684">
    <property type="entry name" value="Salvage_MtnN"/>
    <property type="match status" value="1"/>
</dbReference>
<dbReference type="InterPro" id="IPR010049">
    <property type="entry name" value="MTA_SAH_Nsdase"/>
</dbReference>
<dbReference type="InterPro" id="IPR000845">
    <property type="entry name" value="Nucleoside_phosphorylase_d"/>
</dbReference>
<dbReference type="InterPro" id="IPR035994">
    <property type="entry name" value="Nucleoside_phosphorylase_sf"/>
</dbReference>
<dbReference type="NCBIfam" id="TIGR01704">
    <property type="entry name" value="MTA_SAH-Nsdase"/>
    <property type="match status" value="1"/>
</dbReference>
<dbReference type="NCBIfam" id="NF004079">
    <property type="entry name" value="PRK05584.1"/>
    <property type="match status" value="1"/>
</dbReference>
<dbReference type="PANTHER" id="PTHR46832">
    <property type="entry name" value="5'-METHYLTHIOADENOSINE/S-ADENOSYLHOMOCYSTEINE NUCLEOSIDASE"/>
    <property type="match status" value="1"/>
</dbReference>
<dbReference type="PANTHER" id="PTHR46832:SF1">
    <property type="entry name" value="5'-METHYLTHIOADENOSINE_S-ADENOSYLHOMOCYSTEINE NUCLEOSIDASE"/>
    <property type="match status" value="1"/>
</dbReference>
<dbReference type="Pfam" id="PF01048">
    <property type="entry name" value="PNP_UDP_1"/>
    <property type="match status" value="1"/>
</dbReference>
<dbReference type="SUPFAM" id="SSF53167">
    <property type="entry name" value="Purine and uridine phosphorylases"/>
    <property type="match status" value="1"/>
</dbReference>
<sequence length="231" mass="24162">MKIGIIGAMEPEVAHLIAAMTNATSQTIAGIEFIAGTLAGKDVVVTRSGIGKVAASIATTLLIEKYAPDAVINTGSAGGFVDTLAIGDIVISSEVRHHDVDVTAFGYEIGQMAQQPAAFIPAAHLVEAANKAIAQLGEVKAIEGLICTGDSFICDPVRTQAMLKNFPTMAACEMEGAAIAQVCHQFGVPFVVIRSLSDNANNDSPVDFDSYIVKAGYHSALMVMLLLEQLK</sequence>